<accession>Q48TS4</accession>
<reference key="1">
    <citation type="journal article" date="2005" name="J. Infect. Dis.">
        <title>Genome sequence of a serotype M28 strain of group A Streptococcus: potential new insights into puerperal sepsis and bacterial disease specificity.</title>
        <authorList>
            <person name="Green N.M."/>
            <person name="Zhang S."/>
            <person name="Porcella S.F."/>
            <person name="Nagiec M.J."/>
            <person name="Barbian K.D."/>
            <person name="Beres S.B."/>
            <person name="Lefebvre R.B."/>
            <person name="Musser J.M."/>
        </authorList>
    </citation>
    <scope>NUCLEOTIDE SEQUENCE [LARGE SCALE GENOMIC DNA]</scope>
    <source>
        <strain>MGAS6180</strain>
    </source>
</reference>
<name>RL10_STRPM</name>
<sequence>MSEAIIAKKAEQVELIAEKMKAAASIVVVDSRGLTVDQDTVLRRSLRESGVEFKVIKNSILTRAAEKAGLDELKDVFVGPSAVAFSNEDVIAPAKVINDFTKTADALEIKGGAIEGAVSSKEEIQALATLPNREGMLSMLLSVLQAPVRNVAYAVKAVAENKEGAA</sequence>
<proteinExistence type="inferred from homology"/>
<protein>
    <recommendedName>
        <fullName evidence="1">Large ribosomal subunit protein uL10</fullName>
    </recommendedName>
    <alternativeName>
        <fullName evidence="2">50S ribosomal protein L10</fullName>
    </alternativeName>
</protein>
<organism>
    <name type="scientific">Streptococcus pyogenes serotype M28 (strain MGAS6180)</name>
    <dbReference type="NCBI Taxonomy" id="319701"/>
    <lineage>
        <taxon>Bacteria</taxon>
        <taxon>Bacillati</taxon>
        <taxon>Bacillota</taxon>
        <taxon>Bacilli</taxon>
        <taxon>Lactobacillales</taxon>
        <taxon>Streptococcaceae</taxon>
        <taxon>Streptococcus</taxon>
    </lineage>
</organism>
<keyword id="KW-0687">Ribonucleoprotein</keyword>
<keyword id="KW-0689">Ribosomal protein</keyword>
<keyword id="KW-0694">RNA-binding</keyword>
<keyword id="KW-0699">rRNA-binding</keyword>
<evidence type="ECO:0000255" key="1">
    <source>
        <dbReference type="HAMAP-Rule" id="MF_00362"/>
    </source>
</evidence>
<evidence type="ECO:0000305" key="2"/>
<comment type="function">
    <text evidence="1">Forms part of the ribosomal stalk, playing a central role in the interaction of the ribosome with GTP-bound translation factors.</text>
</comment>
<comment type="subunit">
    <text evidence="1">Part of the ribosomal stalk of the 50S ribosomal subunit. The N-terminus interacts with L11 and the large rRNA to form the base of the stalk. The C-terminus forms an elongated spine to which L12 dimers bind in a sequential fashion forming a multimeric L10(L12)X complex.</text>
</comment>
<comment type="similarity">
    <text evidence="1">Belongs to the universal ribosomal protein uL10 family.</text>
</comment>
<comment type="sequence caution" evidence="2">
    <conflict type="erroneous initiation">
        <sequence resource="EMBL-CDS" id="AAX71882"/>
    </conflict>
</comment>
<feature type="chain" id="PRO_0000234893" description="Large ribosomal subunit protein uL10">
    <location>
        <begin position="1"/>
        <end position="166"/>
    </location>
</feature>
<dbReference type="EMBL" id="CP000056">
    <property type="protein sequence ID" value="AAX71882.1"/>
    <property type="status" value="ALT_INIT"/>
    <property type="molecule type" value="Genomic_DNA"/>
</dbReference>
<dbReference type="RefSeq" id="WP_002984821.1">
    <property type="nucleotide sequence ID" value="NC_007296.2"/>
</dbReference>
<dbReference type="SMR" id="Q48TS4"/>
<dbReference type="GeneID" id="69900916"/>
<dbReference type="KEGG" id="spb:M28_Spy0769"/>
<dbReference type="HOGENOM" id="CLU_092227_2_0_9"/>
<dbReference type="GO" id="GO:0015934">
    <property type="term" value="C:large ribosomal subunit"/>
    <property type="evidence" value="ECO:0007669"/>
    <property type="project" value="InterPro"/>
</dbReference>
<dbReference type="GO" id="GO:0070180">
    <property type="term" value="F:large ribosomal subunit rRNA binding"/>
    <property type="evidence" value="ECO:0007669"/>
    <property type="project" value="UniProtKB-UniRule"/>
</dbReference>
<dbReference type="GO" id="GO:0003735">
    <property type="term" value="F:structural constituent of ribosome"/>
    <property type="evidence" value="ECO:0007669"/>
    <property type="project" value="InterPro"/>
</dbReference>
<dbReference type="GO" id="GO:0006412">
    <property type="term" value="P:translation"/>
    <property type="evidence" value="ECO:0007669"/>
    <property type="project" value="UniProtKB-UniRule"/>
</dbReference>
<dbReference type="CDD" id="cd05797">
    <property type="entry name" value="Ribosomal_L10"/>
    <property type="match status" value="1"/>
</dbReference>
<dbReference type="FunFam" id="3.30.70.1730:FF:000001">
    <property type="entry name" value="50S ribosomal protein L10"/>
    <property type="match status" value="1"/>
</dbReference>
<dbReference type="Gene3D" id="3.30.70.1730">
    <property type="match status" value="1"/>
</dbReference>
<dbReference type="HAMAP" id="MF_00362">
    <property type="entry name" value="Ribosomal_uL10"/>
    <property type="match status" value="1"/>
</dbReference>
<dbReference type="InterPro" id="IPR001790">
    <property type="entry name" value="Ribosomal_uL10"/>
</dbReference>
<dbReference type="InterPro" id="IPR043141">
    <property type="entry name" value="Ribosomal_uL10-like_sf"/>
</dbReference>
<dbReference type="InterPro" id="IPR022973">
    <property type="entry name" value="Ribosomal_uL10_bac"/>
</dbReference>
<dbReference type="InterPro" id="IPR047865">
    <property type="entry name" value="Ribosomal_uL10_bac_type"/>
</dbReference>
<dbReference type="InterPro" id="IPR002363">
    <property type="entry name" value="Ribosomal_uL10_CS_bac"/>
</dbReference>
<dbReference type="NCBIfam" id="NF000955">
    <property type="entry name" value="PRK00099.1-1"/>
    <property type="match status" value="1"/>
</dbReference>
<dbReference type="PANTHER" id="PTHR11560">
    <property type="entry name" value="39S RIBOSOMAL PROTEIN L10, MITOCHONDRIAL"/>
    <property type="match status" value="1"/>
</dbReference>
<dbReference type="Pfam" id="PF00466">
    <property type="entry name" value="Ribosomal_L10"/>
    <property type="match status" value="1"/>
</dbReference>
<dbReference type="SUPFAM" id="SSF160369">
    <property type="entry name" value="Ribosomal protein L10-like"/>
    <property type="match status" value="1"/>
</dbReference>
<dbReference type="PROSITE" id="PS01109">
    <property type="entry name" value="RIBOSOMAL_L10"/>
    <property type="match status" value="1"/>
</dbReference>
<gene>
    <name evidence="1" type="primary">rplJ</name>
    <name type="ordered locus">M28_Spy0769</name>
</gene>